<organism>
    <name type="scientific">Dictyostelium discoideum</name>
    <name type="common">Social amoeba</name>
    <dbReference type="NCBI Taxonomy" id="44689"/>
    <lineage>
        <taxon>Eukaryota</taxon>
        <taxon>Amoebozoa</taxon>
        <taxon>Evosea</taxon>
        <taxon>Eumycetozoa</taxon>
        <taxon>Dictyostelia</taxon>
        <taxon>Dictyosteliales</taxon>
        <taxon>Dictyosteliaceae</taxon>
        <taxon>Dictyostelium</taxon>
    </lineage>
</organism>
<protein>
    <recommendedName>
        <fullName>AP-1 complex subunit mu</fullName>
    </recommendedName>
    <alternativeName>
        <fullName>AP-1 adaptor complex mu1 subunit</fullName>
    </alternativeName>
    <alternativeName>
        <fullName>Adaptor protein complex AP-1 subunit mu</fullName>
    </alternativeName>
    <alternativeName>
        <fullName>Adaptor-related protein complex 1 subunit mu</fullName>
    </alternativeName>
    <alternativeName>
        <fullName>Clathrin-adaptor medium chain Apm1</fullName>
    </alternativeName>
    <alternativeName>
        <fullName>Mu1-adaptin</fullName>
    </alternativeName>
</protein>
<comment type="function">
    <text evidence="4 5">Subunit of clathrin-associated adaptor protein complex 1 that plays a role in protein sorting in the trans-Golgi network (TGN) and endosomes. The AP complexes mediate the recruitment of clathrin to membranes and the recognition of sorting signals within the cytosolic tails of transmembrane cargo molecules. Also involved in early steps of phagocytosis and macropinocytosis.</text>
</comment>
<comment type="subunit">
    <text evidence="1">Adaptor protein complex 1 (AP-1) is a heterotetramer composed of two large adaptins (gamma-type subunit and beta-type subunit), a medium adaptin (mu-type subunit) and a small adaptin (sigma-type subunit).</text>
</comment>
<comment type="subcellular location">
    <subcellularLocation>
        <location>Golgi apparatus</location>
        <location>trans-Golgi network</location>
    </subcellularLocation>
    <subcellularLocation>
        <location evidence="1">Cytoplasmic vesicle</location>
        <location evidence="1">Clathrin-coated vesicle membrane</location>
    </subcellularLocation>
</comment>
<comment type="developmental stage">
    <text evidence="3">Constant expression throughout development.</text>
</comment>
<comment type="disruption phenotype">
    <text evidence="5">Cells are viable but display a severe growth defect and a delayed developmental cycle. In this mutant, phagocytosis drops by 60%, the protein transport between the TGN and lysosomes is probably defective and the contractile vacuole is lost.</text>
</comment>
<comment type="similarity">
    <text evidence="7">Belongs to the adaptor complexes medium subunit family.</text>
</comment>
<proteinExistence type="evidence at protein level"/>
<dbReference type="EMBL" id="AY007278">
    <property type="protein sequence ID" value="AAG11391.1"/>
    <property type="molecule type" value="mRNA"/>
</dbReference>
<dbReference type="EMBL" id="AAFI02000132">
    <property type="protein sequence ID" value="EAL62811.1"/>
    <property type="molecule type" value="Genomic_DNA"/>
</dbReference>
<dbReference type="RefSeq" id="XP_636252.1">
    <property type="nucleotide sequence ID" value="XM_631160.1"/>
</dbReference>
<dbReference type="SMR" id="Q54HS9"/>
<dbReference type="FunCoup" id="Q54HS9">
    <property type="interactions" value="677"/>
</dbReference>
<dbReference type="STRING" id="44689.Q54HS9"/>
<dbReference type="PaxDb" id="44689-DDB0191102"/>
<dbReference type="EnsemblProtists" id="EAL62811">
    <property type="protein sequence ID" value="EAL62811"/>
    <property type="gene ID" value="DDB_G0289247"/>
</dbReference>
<dbReference type="GeneID" id="8627033"/>
<dbReference type="KEGG" id="ddi:DDB_G0289247"/>
<dbReference type="dictyBase" id="DDB_G0289247">
    <property type="gene designation" value="apm1"/>
</dbReference>
<dbReference type="VEuPathDB" id="AmoebaDB:DDB_G0289247"/>
<dbReference type="eggNOG" id="KOG0937">
    <property type="taxonomic scope" value="Eukaryota"/>
</dbReference>
<dbReference type="HOGENOM" id="CLU_026996_0_0_1"/>
<dbReference type="InParanoid" id="Q54HS9"/>
<dbReference type="OMA" id="KPLIWCD"/>
<dbReference type="PhylomeDB" id="Q54HS9"/>
<dbReference type="Reactome" id="R-DDI-432720">
    <property type="pathway name" value="Lysosome Vesicle Biogenesis"/>
</dbReference>
<dbReference type="Reactome" id="R-DDI-6798695">
    <property type="pathway name" value="Neutrophil degranulation"/>
</dbReference>
<dbReference type="Reactome" id="R-DDI-8856825">
    <property type="pathway name" value="Cargo recognition for clathrin-mediated endocytosis"/>
</dbReference>
<dbReference type="PRO" id="PR:Q54HS9"/>
<dbReference type="Proteomes" id="UP000002195">
    <property type="component" value="Chromosome 5"/>
</dbReference>
<dbReference type="GO" id="GO:0030121">
    <property type="term" value="C:AP-1 adaptor complex"/>
    <property type="evidence" value="ECO:0000314"/>
    <property type="project" value="dictyBase"/>
</dbReference>
<dbReference type="GO" id="GO:0030136">
    <property type="term" value="C:clathrin-coated vesicle"/>
    <property type="evidence" value="ECO:0000318"/>
    <property type="project" value="GO_Central"/>
</dbReference>
<dbReference type="GO" id="GO:0035615">
    <property type="term" value="F:clathrin adaptor activity"/>
    <property type="evidence" value="ECO:0000314"/>
    <property type="project" value="dictyBase"/>
</dbReference>
<dbReference type="GO" id="GO:0007032">
    <property type="term" value="P:endosome organization"/>
    <property type="evidence" value="ECO:0000315"/>
    <property type="project" value="dictyBase"/>
</dbReference>
<dbReference type="GO" id="GO:0006971">
    <property type="term" value="P:hypotonic response"/>
    <property type="evidence" value="ECO:0000315"/>
    <property type="project" value="dictyBase"/>
</dbReference>
<dbReference type="GO" id="GO:0006886">
    <property type="term" value="P:intracellular protein transport"/>
    <property type="evidence" value="ECO:0000315"/>
    <property type="project" value="dictyBase"/>
</dbReference>
<dbReference type="GO" id="GO:0007041">
    <property type="term" value="P:lysosomal transport"/>
    <property type="evidence" value="ECO:0000315"/>
    <property type="project" value="dictyBase"/>
</dbReference>
<dbReference type="GO" id="GO:0030587">
    <property type="term" value="P:sorocarp development"/>
    <property type="evidence" value="ECO:0000315"/>
    <property type="project" value="dictyBase"/>
</dbReference>
<dbReference type="GO" id="GO:0016192">
    <property type="term" value="P:vesicle-mediated transport"/>
    <property type="evidence" value="ECO:0000318"/>
    <property type="project" value="GO_Central"/>
</dbReference>
<dbReference type="CDD" id="cd09250">
    <property type="entry name" value="AP-1_Mu1_Cterm"/>
    <property type="match status" value="1"/>
</dbReference>
<dbReference type="CDD" id="cd14835">
    <property type="entry name" value="AP1_Mu_N"/>
    <property type="match status" value="1"/>
</dbReference>
<dbReference type="FunFam" id="3.30.450.60:FF:000006">
    <property type="entry name" value="AP-1 complex subunit mu-1 isoform 1"/>
    <property type="match status" value="1"/>
</dbReference>
<dbReference type="Gene3D" id="3.30.450.60">
    <property type="match status" value="1"/>
</dbReference>
<dbReference type="Gene3D" id="2.60.40.1170">
    <property type="entry name" value="Mu homology domain, subdomain B"/>
    <property type="match status" value="2"/>
</dbReference>
<dbReference type="InterPro" id="IPR050431">
    <property type="entry name" value="Adaptor_comp_med_subunit"/>
</dbReference>
<dbReference type="InterPro" id="IPR036168">
    <property type="entry name" value="AP2_Mu_C_sf"/>
</dbReference>
<dbReference type="InterPro" id="IPR022775">
    <property type="entry name" value="AP_mu_sigma_su"/>
</dbReference>
<dbReference type="InterPro" id="IPR001392">
    <property type="entry name" value="Clathrin_mu"/>
</dbReference>
<dbReference type="InterPro" id="IPR018240">
    <property type="entry name" value="Clathrin_mu_CS"/>
</dbReference>
<dbReference type="InterPro" id="IPR011012">
    <property type="entry name" value="Longin-like_dom_sf"/>
</dbReference>
<dbReference type="InterPro" id="IPR028565">
    <property type="entry name" value="MHD"/>
</dbReference>
<dbReference type="PANTHER" id="PTHR10529">
    <property type="entry name" value="AP COMPLEX SUBUNIT MU"/>
    <property type="match status" value="1"/>
</dbReference>
<dbReference type="Pfam" id="PF00928">
    <property type="entry name" value="Adap_comp_sub"/>
    <property type="match status" value="1"/>
</dbReference>
<dbReference type="Pfam" id="PF01217">
    <property type="entry name" value="Clat_adaptor_s"/>
    <property type="match status" value="1"/>
</dbReference>
<dbReference type="PIRSF" id="PIRSF005992">
    <property type="entry name" value="Clathrin_mu"/>
    <property type="match status" value="1"/>
</dbReference>
<dbReference type="PRINTS" id="PR00314">
    <property type="entry name" value="CLATHRINADPT"/>
</dbReference>
<dbReference type="SUPFAM" id="SSF49447">
    <property type="entry name" value="Second domain of Mu2 adaptin subunit (ap50) of ap2 adaptor"/>
    <property type="match status" value="1"/>
</dbReference>
<dbReference type="SUPFAM" id="SSF64356">
    <property type="entry name" value="SNARE-like"/>
    <property type="match status" value="1"/>
</dbReference>
<dbReference type="PROSITE" id="PS00990">
    <property type="entry name" value="CLAT_ADAPTOR_M_1"/>
    <property type="match status" value="1"/>
</dbReference>
<dbReference type="PROSITE" id="PS00991">
    <property type="entry name" value="CLAT_ADAPTOR_M_2"/>
    <property type="match status" value="1"/>
</dbReference>
<dbReference type="PROSITE" id="PS51072">
    <property type="entry name" value="MHD"/>
    <property type="match status" value="1"/>
</dbReference>
<accession>Q54HS9</accession>
<accession>Q9GPF2</accession>
<name>AP1M_DICDI</name>
<feature type="initiator methionine" description="Removed" evidence="6">
    <location>
        <position position="1"/>
    </location>
</feature>
<feature type="chain" id="PRO_0000327979" description="AP-1 complex subunit mu">
    <location>
        <begin position="2"/>
        <end position="428"/>
    </location>
</feature>
<feature type="domain" description="MHD" evidence="2">
    <location>
        <begin position="169"/>
        <end position="426"/>
    </location>
</feature>
<feature type="modified residue" description="N-acetylalanine; partial" evidence="6">
    <location>
        <position position="2"/>
    </location>
</feature>
<feature type="sequence conflict" description="In Ref. 1; AAG11391." evidence="7" ref="1">
    <original>K</original>
    <variation>R</variation>
    <location>
        <position position="32"/>
    </location>
</feature>
<feature type="sequence conflict" description="In Ref. 1; AAG11391." evidence="7" ref="1">
    <original>T</original>
    <variation>I</variation>
    <location>
        <position position="78"/>
    </location>
</feature>
<feature type="sequence conflict" description="In Ref. 1; AAG11391." evidence="7" ref="1">
    <original>I</original>
    <variation>L</variation>
    <location>
        <position position="102"/>
    </location>
</feature>
<gene>
    <name type="primary">apm1</name>
    <name type="ORF">DDB_G0289247</name>
</gene>
<keyword id="KW-0007">Acetylation</keyword>
<keyword id="KW-0968">Cytoplasmic vesicle</keyword>
<keyword id="KW-0903">Direct protein sequencing</keyword>
<keyword id="KW-0333">Golgi apparatus</keyword>
<keyword id="KW-0472">Membrane</keyword>
<keyword id="KW-0653">Protein transport</keyword>
<keyword id="KW-1185">Reference proteome</keyword>
<keyword id="KW-0813">Transport</keyword>
<sequence>MAASAIFLMDSKGKVLISRNYRGDVPMSVASKFISKILEEEDLNLKPIIQEDGISYIYVKHNNLFLLATTERNANAATILLFLYKMIEVFNEYFKELEEESIRDNFVVIYELMDEMMDFGYPQSTEPKILQEYITQEGYKLERGARGMVLPAAITGAVSWRKEGIKYNKNEVFLDVVESINLLVSANGTVLRSEIVGAVKMKSKLSGMPELRLGLNDKILFENSAKTGAPKGKGVELEDVKFHQCVRLSKFENDRTISFIPPDGEFELMSYRLNTTVKPLIWVECISDTHAHSRVEYMVKAKSQFKGKSIANNVEIIVPVPPDADTPKFRCTVGTCKYAPEKDAIIWTIKQFPGGGREFLMRAHFGLPSISDEKPATKPPIMVKFEIPYYTVSGIQVRYLKIIEKSGYQALPWVRYVCLSGDYQFRTS</sequence>
<evidence type="ECO:0000250" key="1"/>
<evidence type="ECO:0000255" key="2">
    <source>
        <dbReference type="PROSITE-ProRule" id="PRU00404"/>
    </source>
</evidence>
<evidence type="ECO:0000269" key="3">
    <source>
    </source>
</evidence>
<evidence type="ECO:0000269" key="4">
    <source>
    </source>
</evidence>
<evidence type="ECO:0000269" key="5">
    <source>
    </source>
</evidence>
<evidence type="ECO:0000269" key="6">
    <source ref="3"/>
</evidence>
<evidence type="ECO:0000305" key="7"/>
<reference key="1">
    <citation type="journal article" date="2001" name="Gene">
        <title>Identification of clathrin-adaptor medium chains in Dictyostelium discoideum: differential expression during development.</title>
        <authorList>
            <person name="de Chassey B."/>
            <person name="Dubois A."/>
            <person name="Lefkir Y."/>
            <person name="Letourneur F."/>
        </authorList>
    </citation>
    <scope>NUCLEOTIDE SEQUENCE [MRNA]</scope>
    <scope>DEVELOPMENTAL STAGE</scope>
    <source>
        <strain>AX4</strain>
    </source>
</reference>
<reference key="2">
    <citation type="journal article" date="2005" name="Nature">
        <title>The genome of the social amoeba Dictyostelium discoideum.</title>
        <authorList>
            <person name="Eichinger L."/>
            <person name="Pachebat J.A."/>
            <person name="Gloeckner G."/>
            <person name="Rajandream M.A."/>
            <person name="Sucgang R."/>
            <person name="Berriman M."/>
            <person name="Song J."/>
            <person name="Olsen R."/>
            <person name="Szafranski K."/>
            <person name="Xu Q."/>
            <person name="Tunggal B."/>
            <person name="Kummerfeld S."/>
            <person name="Madera M."/>
            <person name="Konfortov B.A."/>
            <person name="Rivero F."/>
            <person name="Bankier A.T."/>
            <person name="Lehmann R."/>
            <person name="Hamlin N."/>
            <person name="Davies R."/>
            <person name="Gaudet P."/>
            <person name="Fey P."/>
            <person name="Pilcher K."/>
            <person name="Chen G."/>
            <person name="Saunders D."/>
            <person name="Sodergren E.J."/>
            <person name="Davis P."/>
            <person name="Kerhornou A."/>
            <person name="Nie X."/>
            <person name="Hall N."/>
            <person name="Anjard C."/>
            <person name="Hemphill L."/>
            <person name="Bason N."/>
            <person name="Farbrother P."/>
            <person name="Desany B."/>
            <person name="Just E."/>
            <person name="Morio T."/>
            <person name="Rost R."/>
            <person name="Churcher C.M."/>
            <person name="Cooper J."/>
            <person name="Haydock S."/>
            <person name="van Driessche N."/>
            <person name="Cronin A."/>
            <person name="Goodhead I."/>
            <person name="Muzny D.M."/>
            <person name="Mourier T."/>
            <person name="Pain A."/>
            <person name="Lu M."/>
            <person name="Harper D."/>
            <person name="Lindsay R."/>
            <person name="Hauser H."/>
            <person name="James K.D."/>
            <person name="Quiles M."/>
            <person name="Madan Babu M."/>
            <person name="Saito T."/>
            <person name="Buchrieser C."/>
            <person name="Wardroper A."/>
            <person name="Felder M."/>
            <person name="Thangavelu M."/>
            <person name="Johnson D."/>
            <person name="Knights A."/>
            <person name="Loulseged H."/>
            <person name="Mungall K.L."/>
            <person name="Oliver K."/>
            <person name="Price C."/>
            <person name="Quail M.A."/>
            <person name="Urushihara H."/>
            <person name="Hernandez J."/>
            <person name="Rabbinowitsch E."/>
            <person name="Steffen D."/>
            <person name="Sanders M."/>
            <person name="Ma J."/>
            <person name="Kohara Y."/>
            <person name="Sharp S."/>
            <person name="Simmonds M.N."/>
            <person name="Spiegler S."/>
            <person name="Tivey A."/>
            <person name="Sugano S."/>
            <person name="White B."/>
            <person name="Walker D."/>
            <person name="Woodward J.R."/>
            <person name="Winckler T."/>
            <person name="Tanaka Y."/>
            <person name="Shaulsky G."/>
            <person name="Schleicher M."/>
            <person name="Weinstock G.M."/>
            <person name="Rosenthal A."/>
            <person name="Cox E.C."/>
            <person name="Chisholm R.L."/>
            <person name="Gibbs R.A."/>
            <person name="Loomis W.F."/>
            <person name="Platzer M."/>
            <person name="Kay R.R."/>
            <person name="Williams J.G."/>
            <person name="Dear P.H."/>
            <person name="Noegel A.A."/>
            <person name="Barrell B.G."/>
            <person name="Kuspa A."/>
        </authorList>
    </citation>
    <scope>NUCLEOTIDE SEQUENCE [LARGE SCALE GENOMIC DNA]</scope>
    <source>
        <strain>AX4</strain>
    </source>
</reference>
<reference key="3">
    <citation type="submission" date="2010-01" db="UniProtKB">
        <authorList>
            <person name="Bienvenut W.V."/>
            <person name="Veltman D.M."/>
            <person name="Insall R.H."/>
        </authorList>
    </citation>
    <scope>PROTEIN SEQUENCE OF 2-12; 20-32; 61-85; 129-140 AND 213-226</scope>
    <scope>CLEAVAGE OF INITIATOR METHIONINE</scope>
    <scope>ACETYLATION AT ALA-2</scope>
    <scope>IDENTIFICATION BY MASS SPECTROMETRY</scope>
</reference>
<reference key="4">
    <citation type="journal article" date="2003" name="Mol. Biol. Cell">
        <title>The AP-1 clathrin-adaptor is required for lysosomal enzymes sorting and biogenesis of the contractile vacuole complex in Dictyostelium cells.</title>
        <authorList>
            <person name="Lefkir Y."/>
            <person name="de Chassey B."/>
            <person name="Dubois A."/>
            <person name="Bogdanovic A."/>
            <person name="Brady R.J."/>
            <person name="Destaing O."/>
            <person name="Bruckert F."/>
            <person name="O'Halloran T.J."/>
            <person name="Cosson P."/>
            <person name="Letourneur F."/>
        </authorList>
    </citation>
    <scope>FUNCTION</scope>
</reference>
<reference key="5">
    <citation type="journal article" date="2004" name="Mol. Biol. Cell">
        <title>Involvement of the AP-1 adaptor complex in early steps of phagocytosis and macropinocytosis.</title>
        <authorList>
            <person name="Lefkir Y."/>
            <person name="Malbouyres M."/>
            <person name="Gotthardt D."/>
            <person name="Ozinsky A."/>
            <person name="Cornillon S."/>
            <person name="Bruckert F."/>
            <person name="Aderem A.A."/>
            <person name="Soldati T."/>
            <person name="Cosson P."/>
            <person name="Letourneur F."/>
        </authorList>
    </citation>
    <scope>FUNCTION</scope>
    <scope>DISRUPTION PHENOTYPE</scope>
</reference>
<reference key="6">
    <citation type="journal article" date="2006" name="Eur. J. Cell Biol.">
        <title>Identification and isolation of Dictyostelium microtubule-associated protein interactors by tandem affinity purification.</title>
        <authorList>
            <person name="Koch K.V."/>
            <person name="Reinders Y."/>
            <person name="Ho T.-H."/>
            <person name="Sickmann A."/>
            <person name="Graef R."/>
        </authorList>
    </citation>
    <scope>IDENTIFICATION BY MASS SPECTROMETRY [LARGE SCALE ANALYSIS]</scope>
    <source>
        <strain>AX2</strain>
    </source>
</reference>